<dbReference type="EMBL" id="CU928162">
    <property type="protein sequence ID" value="CAR06390.1"/>
    <property type="molecule type" value="Genomic_DNA"/>
</dbReference>
<dbReference type="RefSeq" id="WP_000272188.1">
    <property type="nucleotide sequence ID" value="NC_011745.1"/>
</dbReference>
<dbReference type="SMR" id="B7MP25"/>
<dbReference type="KEGG" id="ecq:ECED1_0170"/>
<dbReference type="HOGENOM" id="CLU_136774_0_0_6"/>
<dbReference type="Proteomes" id="UP000000748">
    <property type="component" value="Chromosome"/>
</dbReference>
<dbReference type="HAMAP" id="MF_01519">
    <property type="entry name" value="UPF0325"/>
    <property type="match status" value="1"/>
</dbReference>
<dbReference type="InterPro" id="IPR020911">
    <property type="entry name" value="UPF0325"/>
</dbReference>
<dbReference type="NCBIfam" id="NF010213">
    <property type="entry name" value="PRK13677.1"/>
    <property type="match status" value="1"/>
</dbReference>
<dbReference type="Pfam" id="PF11944">
    <property type="entry name" value="DUF3461"/>
    <property type="match status" value="1"/>
</dbReference>
<name>YAEH_ECO81</name>
<proteinExistence type="inferred from homology"/>
<comment type="similarity">
    <text evidence="1">Belongs to the UPF0325 family.</text>
</comment>
<protein>
    <recommendedName>
        <fullName evidence="1">UPF0325 protein YaeH</fullName>
    </recommendedName>
</protein>
<reference key="1">
    <citation type="journal article" date="2009" name="PLoS Genet.">
        <title>Organised genome dynamics in the Escherichia coli species results in highly diverse adaptive paths.</title>
        <authorList>
            <person name="Touchon M."/>
            <person name="Hoede C."/>
            <person name="Tenaillon O."/>
            <person name="Barbe V."/>
            <person name="Baeriswyl S."/>
            <person name="Bidet P."/>
            <person name="Bingen E."/>
            <person name="Bonacorsi S."/>
            <person name="Bouchier C."/>
            <person name="Bouvet O."/>
            <person name="Calteau A."/>
            <person name="Chiapello H."/>
            <person name="Clermont O."/>
            <person name="Cruveiller S."/>
            <person name="Danchin A."/>
            <person name="Diard M."/>
            <person name="Dossat C."/>
            <person name="Karoui M.E."/>
            <person name="Frapy E."/>
            <person name="Garry L."/>
            <person name="Ghigo J.M."/>
            <person name="Gilles A.M."/>
            <person name="Johnson J."/>
            <person name="Le Bouguenec C."/>
            <person name="Lescat M."/>
            <person name="Mangenot S."/>
            <person name="Martinez-Jehanne V."/>
            <person name="Matic I."/>
            <person name="Nassif X."/>
            <person name="Oztas S."/>
            <person name="Petit M.A."/>
            <person name="Pichon C."/>
            <person name="Rouy Z."/>
            <person name="Ruf C.S."/>
            <person name="Schneider D."/>
            <person name="Tourret J."/>
            <person name="Vacherie B."/>
            <person name="Vallenet D."/>
            <person name="Medigue C."/>
            <person name="Rocha E.P.C."/>
            <person name="Denamur E."/>
        </authorList>
    </citation>
    <scope>NUCLEOTIDE SEQUENCE [LARGE SCALE GENOMIC DNA]</scope>
    <source>
        <strain>ED1a</strain>
    </source>
</reference>
<accession>B7MP25</accession>
<organism>
    <name type="scientific">Escherichia coli O81 (strain ED1a)</name>
    <dbReference type="NCBI Taxonomy" id="585397"/>
    <lineage>
        <taxon>Bacteria</taxon>
        <taxon>Pseudomonadati</taxon>
        <taxon>Pseudomonadota</taxon>
        <taxon>Gammaproteobacteria</taxon>
        <taxon>Enterobacterales</taxon>
        <taxon>Enterobacteriaceae</taxon>
        <taxon>Escherichia</taxon>
    </lineage>
</organism>
<evidence type="ECO:0000255" key="1">
    <source>
        <dbReference type="HAMAP-Rule" id="MF_01519"/>
    </source>
</evidence>
<feature type="chain" id="PRO_1000185094" description="UPF0325 protein YaeH">
    <location>
        <begin position="1"/>
        <end position="128"/>
    </location>
</feature>
<sequence>MYDNLKSLGITNPEEIDRYSLRQEANNDILKIYFQKDKGEFFAKSVKFKYPRQRKTVVADGVGQGYKEVQEISPNLRYIIDELDQICQRDRSEVDLKRKILDDLRHLESVVTNKISEIEADLEKLTRK</sequence>
<gene>
    <name evidence="1" type="primary">yaeH</name>
    <name type="ordered locus">ECED1_0170</name>
</gene>